<organism>
    <name type="scientific">Rattus norvegicus</name>
    <name type="common">Rat</name>
    <dbReference type="NCBI Taxonomy" id="10116"/>
    <lineage>
        <taxon>Eukaryota</taxon>
        <taxon>Metazoa</taxon>
        <taxon>Chordata</taxon>
        <taxon>Craniata</taxon>
        <taxon>Vertebrata</taxon>
        <taxon>Euteleostomi</taxon>
        <taxon>Mammalia</taxon>
        <taxon>Eutheria</taxon>
        <taxon>Euarchontoglires</taxon>
        <taxon>Glires</taxon>
        <taxon>Rodentia</taxon>
        <taxon>Myomorpha</taxon>
        <taxon>Muroidea</taxon>
        <taxon>Muridae</taxon>
        <taxon>Murinae</taxon>
        <taxon>Rattus</taxon>
    </lineage>
</organism>
<gene>
    <name evidence="11" type="primary">Kyat1</name>
    <name type="synonym">Ccbl1</name>
    <name type="synonym">Kat</name>
</gene>
<protein>
    <recommendedName>
        <fullName evidence="9">Kynurenine--oxoglutarate transaminase 1</fullName>
        <shortName>Kynurenine--oxoglutarate transaminase I</shortName>
        <ecNumber evidence="3 4 5">2.6.1.7</ecNumber>
    </recommendedName>
    <alternativeName>
        <fullName evidence="10">Cysteine-S-conjugate beta-lyase</fullName>
        <ecNumber evidence="6">4.4.1.13</ecNumber>
    </alternativeName>
    <alternativeName>
        <fullName>Glutamine transaminase K</fullName>
        <shortName>GTK</shortName>
    </alternativeName>
    <alternativeName>
        <fullName evidence="10">Glutamine--phenylpyruvate transaminase</fullName>
        <ecNumber evidence="5 6">2.6.1.64</ecNumber>
    </alternativeName>
    <alternativeName>
        <fullName evidence="11">Kynurenine aminotransferase 1</fullName>
    </alternativeName>
    <alternativeName>
        <fullName>Kynurenine aminotransferase I</fullName>
        <shortName>KATI</shortName>
    </alternativeName>
</protein>
<reference key="1">
    <citation type="journal article" date="1993" name="Mol. Pharmacol.">
        <title>Isolation and expression of a cDNA coding for rat kidney cytosolic cysteine conjugate beta-lyase.</title>
        <authorList>
            <person name="Perry S.J."/>
            <person name="Schofield M.A."/>
            <person name="MacFarlane M."/>
            <person name="Lock E.A."/>
            <person name="King L.J."/>
            <person name="Gibson G.G."/>
            <person name="Goldfarb P.S."/>
        </authorList>
    </citation>
    <scope>NUCLEOTIDE SEQUENCE [MRNA] (ISOFORM 2)</scope>
    <scope>PROTEIN SEQUENCE OF 39-62; 228-259 AND 388-401</scope>
    <scope>FUNCTION</scope>
    <scope>CATALYTIC ACTIVITY</scope>
    <scope>SUBCELLULAR LOCATION</scope>
    <scope>TISSUE SPECIFICITY</scope>
    <source>
        <tissue>Kidney</tissue>
    </source>
</reference>
<reference key="2">
    <citation type="journal article" date="1994" name="FEBS Lett.">
        <title>Molecular cloning of rat kynurenine aminotransferase: identity with glutamine transaminase K.</title>
        <authorList>
            <person name="Mosca M."/>
            <person name="Cozzi L."/>
            <person name="Breton J."/>
            <person name="Speciale C."/>
            <person name="Okuno E."/>
            <person name="Schwarcz R."/>
            <person name="Benatti L."/>
        </authorList>
    </citation>
    <scope>NUCLEOTIDE SEQUENCE [MRNA] (ISOFORM 2)</scope>
</reference>
<reference key="3">
    <citation type="journal article" date="1995" name="FEBS Lett.">
        <title>Identification of a mitochondrial form of kynurenine aminotransferase/glutamine transaminase K from rat brain.</title>
        <authorList>
            <person name="Malherbe P."/>
            <person name="Alberati-Giani D."/>
            <person name="Koehler C."/>
            <person name="Cesura A.M."/>
        </authorList>
    </citation>
    <scope>NUCLEOTIDE SEQUENCE [MRNA] (ISOFORM 1)</scope>
    <scope>FUNCTION</scope>
    <scope>CATALYTIC ACTIVITY</scope>
    <scope>PATHWAY</scope>
    <scope>SUBCELLULAR LOCATION (ISOFORMS 1 AND 2)</scope>
    <scope>BIOPHYSICOCHEMICAL PROPERTIES (ISOFORM 1)</scope>
    <source>
        <tissue>Cerebellum</tissue>
    </source>
</reference>
<reference key="4">
    <citation type="journal article" date="2003" name="Biochim. Biophys. Acta">
        <title>Tissue expression and translational control of rat kynurenine aminotransferase/glutamine transaminase K mRNAs.</title>
        <authorList>
            <person name="Mosca M."/>
            <person name="Croci C."/>
            <person name="Mostardini M."/>
            <person name="Breton J."/>
            <person name="Malyszko J."/>
            <person name="Avanzi N."/>
            <person name="Toma S."/>
            <person name="Benatti L."/>
            <person name="Gatti S."/>
        </authorList>
    </citation>
    <scope>NUCLEOTIDE SEQUENCE [GENOMIC DNA / MRNA] (ISOFORM 1)</scope>
</reference>
<reference key="5">
    <citation type="journal article" date="1980" name="Biochem. J.">
        <title>Crystallization and characterization of human liver kynurenine-glyoxylate aminotransferase. Identity with alanine-glyoxylate aminotransferase and serine-pyruvate aminotransferase.</title>
        <authorList>
            <person name="Okuno E."/>
            <person name="Minatogawa Y."/>
            <person name="Nakamura M."/>
            <person name="Kamoda N."/>
            <person name="Nakanishi J."/>
            <person name="Makino M."/>
            <person name="Kido R."/>
        </authorList>
    </citation>
    <scope>FUNCTION</scope>
    <scope>CATALYTIC ACTIVITY</scope>
    <scope>SUBSTRATE SPECIFICITY</scope>
    <scope>BIOPHYSICOCHEMICAL PROPERTIES</scope>
    <scope>SUBUNIT</scope>
</reference>
<reference key="6">
    <citation type="journal article" date="1991" name="J. Neurochem.">
        <title>Measurement of rat brain kynurenine aminotransferase at physiological kynurenine concentrations.</title>
        <authorList>
            <person name="Okuno E."/>
            <person name="Schmidt W."/>
            <person name="Parks D.A."/>
            <person name="Nakamura M."/>
            <person name="Schwarcz R."/>
        </authorList>
    </citation>
    <scope>FUNCTION</scope>
    <scope>CATALYTIC ACTIVITY</scope>
    <scope>BIOPHYSICOCHEMICAL PROPERTIES</scope>
    <scope>ACTIVITY REGULATION</scope>
</reference>
<feature type="chain" id="PRO_0000452095" description="Kynurenine--oxoglutarate transaminase 1">
    <location>
        <begin position="1"/>
        <end position="423"/>
    </location>
</feature>
<feature type="binding site" evidence="1">
    <location>
        <position position="36"/>
    </location>
    <ligand>
        <name>substrate</name>
    </ligand>
</feature>
<feature type="binding site" evidence="1">
    <location>
        <position position="185"/>
    </location>
    <ligand>
        <name>substrate</name>
    </ligand>
</feature>
<feature type="binding site" evidence="1">
    <location>
        <position position="398"/>
    </location>
    <ligand>
        <name>substrate</name>
    </ligand>
</feature>
<feature type="modified residue" description="N6-succinyllysine" evidence="2">
    <location>
        <position position="82"/>
    </location>
</feature>
<feature type="modified residue" description="N6-(pyridoxal phosphate)lysine" evidence="1">
    <location>
        <position position="247"/>
    </location>
</feature>
<feature type="splice variant" id="VSP_060909" description="In isoform 1.">
    <original>M</original>
    <variation>MFRSAAALSVHLMWPLWGRKAGASLTRCLHQSLTM</variation>
    <location>
        <position position="1"/>
    </location>
</feature>
<feature type="sequence conflict" description="In Ref. 2; AAB32197 and 4; AAF06837." evidence="8" ref="2 4">
    <original>R</original>
    <variation>A</variation>
    <location>
        <position position="107"/>
    </location>
</feature>
<feature type="sequence conflict" description="In Ref. 2; AAB32197." evidence="8" ref="2">
    <original>I</original>
    <variation>V</variation>
    <location>
        <position position="177"/>
    </location>
</feature>
<accession>Q08415</accession>
<accession>Q9R096</accession>
<proteinExistence type="evidence at protein level"/>
<comment type="function">
    <text evidence="3 4 5 6">Catalyzes the irreversible transamination of the L-tryptophan metabolite L-kynurenine to form kynurenic acid (KA), an intermediate in the tryptophan catabolic pathway which is also a broad spectrum antagonist of the three ionotropic excitatory amino acid receptors among others (PubMed:2072101, PubMed:6783036, PubMed:7796908). Metabolizes the cysteine conjugates of certain halogenated alkenes and alkanes to form reactive metabolites. Catalyzes the beta-elimination of S-conjugates and Se-conjugates of L-(seleno)cysteine, resulting in the cleavage of the C-S or C-Se bond (PubMed:8502223).</text>
</comment>
<comment type="catalytic activity">
    <reaction evidence="3 4 5">
        <text>L-kynurenine + 2-oxoglutarate = kynurenate + L-glutamate + H2O</text>
        <dbReference type="Rhea" id="RHEA:65560"/>
        <dbReference type="ChEBI" id="CHEBI:15377"/>
        <dbReference type="ChEBI" id="CHEBI:16810"/>
        <dbReference type="ChEBI" id="CHEBI:29985"/>
        <dbReference type="ChEBI" id="CHEBI:57959"/>
        <dbReference type="ChEBI" id="CHEBI:58454"/>
        <dbReference type="EC" id="2.6.1.7"/>
    </reaction>
    <physiologicalReaction direction="left-to-right" evidence="9">
        <dbReference type="Rhea" id="RHEA:65561"/>
    </physiologicalReaction>
</comment>
<comment type="catalytic activity">
    <reaction evidence="5 6">
        <text>3-phenylpyruvate + L-glutamine = 2-oxoglutaramate + L-phenylalanine</text>
        <dbReference type="Rhea" id="RHEA:17593"/>
        <dbReference type="ChEBI" id="CHEBI:16769"/>
        <dbReference type="ChEBI" id="CHEBI:18005"/>
        <dbReference type="ChEBI" id="CHEBI:58095"/>
        <dbReference type="ChEBI" id="CHEBI:58359"/>
        <dbReference type="EC" id="2.6.1.64"/>
    </reaction>
</comment>
<comment type="catalytic activity">
    <reaction evidence="6">
        <text>an S-substituted L-cysteine + H2O = a thiol + pyruvate + NH4(+)</text>
        <dbReference type="Rhea" id="RHEA:18121"/>
        <dbReference type="ChEBI" id="CHEBI:15361"/>
        <dbReference type="ChEBI" id="CHEBI:15377"/>
        <dbReference type="ChEBI" id="CHEBI:28938"/>
        <dbReference type="ChEBI" id="CHEBI:29256"/>
        <dbReference type="ChEBI" id="CHEBI:58717"/>
        <dbReference type="EC" id="4.4.1.13"/>
    </reaction>
    <physiologicalReaction direction="left-to-right" evidence="10">
        <dbReference type="Rhea" id="RHEA:18122"/>
    </physiologicalReaction>
</comment>
<comment type="cofactor">
    <cofactor>
        <name>pyridoxal 5'-phosphate</name>
        <dbReference type="ChEBI" id="CHEBI:597326"/>
    </cofactor>
</comment>
<comment type="activity regulation">
    <text evidence="3">Inhibited by aminooxyacetate (in vitro).</text>
</comment>
<comment type="biophysicochemical properties">
    <kinetics>
        <KM evidence="3">17 uM for L-kynurenine (with 2-oxoglutarate as cosubstrate)</KM>
        <KM evidence="3">910 uM for L-kynurenine (with pyruvate as cosubstrate)</KM>
        <KM evidence="3">150 uM for 2-oxoglutarate</KM>
        <KM evidence="3">160 uM for pyruvate</KM>
    </kinetics>
    <phDependence>
        <text evidence="4">Optimum pH is 9-9.5.</text>
    </phDependence>
</comment>
<comment type="biophysicochemical properties">
    <molecule>Isoform 1</molecule>
    <kinetics>
        <KM evidence="5">1630 uM for L-kynurenine (with 2-oxoglutarate as cosubstrate)</KM>
        <KM evidence="5">96.2 uM for L-kynurenine (with L-pyruvate as cosubstrate)</KM>
        <Vmax evidence="5">10.8 nmol/min/mg enzyme with L-kynurenine as substrate (with 2-oxoglutarate as cosubstrate)</Vmax>
        <Vmax evidence="5">0.39 nmol/min/mg enzyme with L-kynurenine as substrate (with L-pyruvate as cosubstrate)</Vmax>
    </kinetics>
</comment>
<comment type="pathway">
    <text evidence="9">Amino-acid degradation; L-kynurenine degradation; kynurenate from L-kynurenine: step 1/2.</text>
</comment>
<comment type="subunit">
    <text evidence="4">Homodimer.</text>
</comment>
<comment type="subcellular location">
    <molecule>Isoform 2</molecule>
    <subcellularLocation>
        <location evidence="5 6">Cytoplasm</location>
        <location evidence="5 6">Cytosol</location>
    </subcellularLocation>
</comment>
<comment type="subcellular location">
    <molecule>Isoform 1</molecule>
    <subcellularLocation>
        <location evidence="5">Mitochondrion matrix</location>
    </subcellularLocation>
</comment>
<comment type="alternative products">
    <event type="alternative splicing"/>
    <isoform>
        <id>Q08415-2</id>
        <name>2</name>
        <name evidence="7">S-KAT/GTK</name>
        <sequence type="displayed"/>
    </isoform>
    <isoform>
        <id>Q08415-1</id>
        <name>1</name>
        <name evidence="7">M-KAT/GTK</name>
        <sequence type="described" ref="VSP_060909"/>
    </isoform>
</comment>
<comment type="tissue specificity">
    <text evidence="6">Detected in kidney.</text>
</comment>
<comment type="similarity">
    <text evidence="8">Belongs to the class-I pyridoxal-phosphate-dependent aminotransferase family.</text>
</comment>
<sequence length="423" mass="47873">MTKRLQARRLDGIDQNLWVEFGKLTKEYDVVNLGQGFPDFSPPDFATQAFQQATSGNFMLNQYTRAFGYPPLTNVLASFFGKLLGQEMDPLTNVLVTVGAYGALFTRFQALVDEGDEVIIMEPAFDCYEPMTMMAGGCPVFVTLKPSPAPKGKLGASNDWQLDPAELASKFTPRTKILVLNTPNNPLGKVFSRMELELVANLCQQHDVVCISDEVYQWLVYDGHQHVSIASLPGMWDRTLTIGSAGKSFSATGWKVGWVMGPDNIMKHLRTVHQNSIFHCPTQAQAAVAQCFEREQQHFGQPSSYFLQLPQAMELNRDHMIRSLQSVGLKLWISQGSYFLIADISDFKSKMPDLPGAEDEPYDRRFAKWMIKNMGLVGIPVSTFFSRPHQKDFDHYIRFCFVKDKATLQAMDERLRKWKELQP</sequence>
<dbReference type="EC" id="2.6.1.7" evidence="3 4 5"/>
<dbReference type="EC" id="4.4.1.13" evidence="6"/>
<dbReference type="EC" id="2.6.1.64" evidence="5 6"/>
<dbReference type="EMBL" id="S61960">
    <property type="protein sequence ID" value="AAB26845.1"/>
    <property type="molecule type" value="mRNA"/>
</dbReference>
<dbReference type="EMBL" id="S74029">
    <property type="protein sequence ID" value="AAB32197.1"/>
    <property type="molecule type" value="mRNA"/>
</dbReference>
<dbReference type="EMBL" id="Z49696">
    <property type="protein sequence ID" value="CAA89696.1"/>
    <property type="molecule type" value="mRNA"/>
</dbReference>
<dbReference type="EMBL" id="AF100154">
    <property type="protein sequence ID" value="AAF06837.1"/>
    <property type="molecule type" value="Genomic_DNA"/>
</dbReference>
<dbReference type="EMBL" id="AF267749">
    <property type="status" value="NOT_ANNOTATED_CDS"/>
    <property type="molecule type" value="mRNA"/>
</dbReference>
<dbReference type="PIR" id="S66270">
    <property type="entry name" value="S66270"/>
</dbReference>
<dbReference type="RefSeq" id="NP_001013182.3">
    <property type="nucleotide sequence ID" value="NM_001013164.3"/>
</dbReference>
<dbReference type="SMR" id="Q08415"/>
<dbReference type="FunCoup" id="Q08415">
    <property type="interactions" value="648"/>
</dbReference>
<dbReference type="STRING" id="10116.ENSRNOP00000021865"/>
<dbReference type="iPTMnet" id="Q08415"/>
<dbReference type="PhosphoSitePlus" id="Q08415"/>
<dbReference type="jPOST" id="Q08415"/>
<dbReference type="PaxDb" id="10116-ENSRNOP00000021865"/>
<dbReference type="GeneID" id="311844"/>
<dbReference type="KEGG" id="rno:311844"/>
<dbReference type="UCSC" id="RGD:1306912">
    <molecule id="Q08415-2"/>
    <property type="organism name" value="rat"/>
</dbReference>
<dbReference type="AGR" id="RGD:1306912"/>
<dbReference type="CTD" id="883"/>
<dbReference type="RGD" id="1306912">
    <property type="gene designation" value="Kyat1"/>
</dbReference>
<dbReference type="eggNOG" id="KOG0257">
    <property type="taxonomic scope" value="Eukaryota"/>
</dbReference>
<dbReference type="InParanoid" id="Q08415"/>
<dbReference type="OrthoDB" id="35413at9989"/>
<dbReference type="PhylomeDB" id="Q08415"/>
<dbReference type="BRENDA" id="2.6.1.7">
    <property type="organism ID" value="5301"/>
</dbReference>
<dbReference type="Reactome" id="R-RNO-71240">
    <property type="pathway name" value="Tryptophan catabolism"/>
</dbReference>
<dbReference type="Reactome" id="R-RNO-8964208">
    <property type="pathway name" value="Phenylalanine metabolism"/>
</dbReference>
<dbReference type="Reactome" id="R-RNO-8964539">
    <property type="pathway name" value="Glutamate and glutamine metabolism"/>
</dbReference>
<dbReference type="SABIO-RK" id="Q08415"/>
<dbReference type="UniPathway" id="UPA00334">
    <property type="reaction ID" value="UER00726"/>
</dbReference>
<dbReference type="PRO" id="PR:Q08415"/>
<dbReference type="Proteomes" id="UP000002494">
    <property type="component" value="Unplaced"/>
</dbReference>
<dbReference type="GO" id="GO:0005737">
    <property type="term" value="C:cytoplasm"/>
    <property type="evidence" value="ECO:0000318"/>
    <property type="project" value="GO_Central"/>
</dbReference>
<dbReference type="GO" id="GO:0005829">
    <property type="term" value="C:cytosol"/>
    <property type="evidence" value="ECO:0007669"/>
    <property type="project" value="UniProtKB-SubCell"/>
</dbReference>
<dbReference type="GO" id="GO:0005759">
    <property type="term" value="C:mitochondrial matrix"/>
    <property type="evidence" value="ECO:0007669"/>
    <property type="project" value="UniProtKB-SubCell"/>
</dbReference>
<dbReference type="GO" id="GO:0005739">
    <property type="term" value="C:mitochondrion"/>
    <property type="evidence" value="ECO:0000318"/>
    <property type="project" value="GO_Central"/>
</dbReference>
<dbReference type="GO" id="GO:0047804">
    <property type="term" value="F:cysteine-S-conjugate beta-lyase activity"/>
    <property type="evidence" value="ECO:0000314"/>
    <property type="project" value="RGD"/>
</dbReference>
<dbReference type="GO" id="GO:0047316">
    <property type="term" value="F:glutamine-phenylpyruvate transaminase activity"/>
    <property type="evidence" value="ECO:0000314"/>
    <property type="project" value="RGD"/>
</dbReference>
<dbReference type="GO" id="GO:0016212">
    <property type="term" value="F:kynurenine-oxoglutarate transaminase activity"/>
    <property type="evidence" value="ECO:0000250"/>
    <property type="project" value="UniProtKB"/>
</dbReference>
<dbReference type="GO" id="GO:0042803">
    <property type="term" value="F:protein homodimerization activity"/>
    <property type="evidence" value="ECO:0000266"/>
    <property type="project" value="RGD"/>
</dbReference>
<dbReference type="GO" id="GO:0030170">
    <property type="term" value="F:pyridoxal phosphate binding"/>
    <property type="evidence" value="ECO:0007669"/>
    <property type="project" value="InterPro"/>
</dbReference>
<dbReference type="GO" id="GO:0009058">
    <property type="term" value="P:biosynthetic process"/>
    <property type="evidence" value="ECO:0007669"/>
    <property type="project" value="InterPro"/>
</dbReference>
<dbReference type="GO" id="GO:0070189">
    <property type="term" value="P:kynurenine metabolic process"/>
    <property type="evidence" value="ECO:0000250"/>
    <property type="project" value="UniProtKB"/>
</dbReference>
<dbReference type="GO" id="GO:0097053">
    <property type="term" value="P:L-kynurenine catabolic process"/>
    <property type="evidence" value="ECO:0007669"/>
    <property type="project" value="UniProtKB-UniPathway"/>
</dbReference>
<dbReference type="GO" id="GO:0097052">
    <property type="term" value="P:L-kynurenine metabolic process"/>
    <property type="evidence" value="ECO:0000314"/>
    <property type="project" value="RGD"/>
</dbReference>
<dbReference type="GO" id="GO:0006090">
    <property type="term" value="P:pyruvate metabolic process"/>
    <property type="evidence" value="ECO:0000314"/>
    <property type="project" value="RGD"/>
</dbReference>
<dbReference type="GO" id="GO:0009617">
    <property type="term" value="P:response to bacterium"/>
    <property type="evidence" value="ECO:0000266"/>
    <property type="project" value="RGD"/>
</dbReference>
<dbReference type="CDD" id="cd00609">
    <property type="entry name" value="AAT_like"/>
    <property type="match status" value="1"/>
</dbReference>
<dbReference type="FunFam" id="3.40.640.10:FF:000264">
    <property type="entry name" value="Kynurenine--oxoglutarate transaminase 1"/>
    <property type="match status" value="1"/>
</dbReference>
<dbReference type="FunFam" id="3.90.1150.10:FF:000141">
    <property type="entry name" value="Kynurenine--oxoglutarate transaminase 1"/>
    <property type="match status" value="1"/>
</dbReference>
<dbReference type="FunFam" id="3.90.1150.10:FF:000275">
    <property type="entry name" value="kynurenine--oxoglutarate transaminase 1"/>
    <property type="match status" value="1"/>
</dbReference>
<dbReference type="Gene3D" id="3.90.1150.10">
    <property type="entry name" value="Aspartate Aminotransferase, domain 1"/>
    <property type="match status" value="1"/>
</dbReference>
<dbReference type="Gene3D" id="3.40.640.10">
    <property type="entry name" value="Type I PLP-dependent aspartate aminotransferase-like (Major domain)"/>
    <property type="match status" value="1"/>
</dbReference>
<dbReference type="InterPro" id="IPR004839">
    <property type="entry name" value="Aminotransferase_I/II_large"/>
</dbReference>
<dbReference type="InterPro" id="IPR051326">
    <property type="entry name" value="Kynurenine-oxoglutarate_AT"/>
</dbReference>
<dbReference type="InterPro" id="IPR015424">
    <property type="entry name" value="PyrdxlP-dep_Trfase"/>
</dbReference>
<dbReference type="InterPro" id="IPR015421">
    <property type="entry name" value="PyrdxlP-dep_Trfase_major"/>
</dbReference>
<dbReference type="InterPro" id="IPR015422">
    <property type="entry name" value="PyrdxlP-dep_Trfase_small"/>
</dbReference>
<dbReference type="PANTHER" id="PTHR43807">
    <property type="entry name" value="FI04487P"/>
    <property type="match status" value="1"/>
</dbReference>
<dbReference type="PANTHER" id="PTHR43807:SF14">
    <property type="entry name" value="KYNURENINE--OXOGLUTARATE TRANSAMINASE 1"/>
    <property type="match status" value="1"/>
</dbReference>
<dbReference type="Pfam" id="PF00155">
    <property type="entry name" value="Aminotran_1_2"/>
    <property type="match status" value="1"/>
</dbReference>
<dbReference type="SUPFAM" id="SSF53383">
    <property type="entry name" value="PLP-dependent transferases"/>
    <property type="match status" value="1"/>
</dbReference>
<name>KAT1_RAT</name>
<keyword id="KW-0025">Alternative splicing</keyword>
<keyword id="KW-0032">Aminotransferase</keyword>
<keyword id="KW-0963">Cytoplasm</keyword>
<keyword id="KW-0903">Direct protein sequencing</keyword>
<keyword id="KW-0456">Lyase</keyword>
<keyword id="KW-0496">Mitochondrion</keyword>
<keyword id="KW-0663">Pyridoxal phosphate</keyword>
<keyword id="KW-1185">Reference proteome</keyword>
<keyword id="KW-0808">Transferase</keyword>
<keyword id="KW-0809">Transit peptide</keyword>
<evidence type="ECO:0000250" key="1">
    <source>
        <dbReference type="UniProtKB" id="Q16773"/>
    </source>
</evidence>
<evidence type="ECO:0000250" key="2">
    <source>
        <dbReference type="UniProtKB" id="Q8BTY1"/>
    </source>
</evidence>
<evidence type="ECO:0000269" key="3">
    <source>
    </source>
</evidence>
<evidence type="ECO:0000269" key="4">
    <source>
    </source>
</evidence>
<evidence type="ECO:0000269" key="5">
    <source>
    </source>
</evidence>
<evidence type="ECO:0000269" key="6">
    <source>
    </source>
</evidence>
<evidence type="ECO:0000303" key="7">
    <source>
    </source>
</evidence>
<evidence type="ECO:0000305" key="8"/>
<evidence type="ECO:0000305" key="9">
    <source>
    </source>
</evidence>
<evidence type="ECO:0000305" key="10">
    <source>
    </source>
</evidence>
<evidence type="ECO:0000312" key="11">
    <source>
        <dbReference type="RGD" id="1306912"/>
    </source>
</evidence>